<dbReference type="EMBL" id="AL123456">
    <property type="protein sequence ID" value="CCP43222.1"/>
    <property type="molecule type" value="Genomic_DNA"/>
</dbReference>
<dbReference type="PIR" id="C70744">
    <property type="entry name" value="C70744"/>
</dbReference>
<dbReference type="RefSeq" id="NP_215002.1">
    <property type="nucleotide sequence ID" value="NC_000962.3"/>
</dbReference>
<dbReference type="STRING" id="83332.Rv0488"/>
<dbReference type="PaxDb" id="83332-Rv0488"/>
<dbReference type="GeneID" id="887171"/>
<dbReference type="KEGG" id="mtu:Rv0488"/>
<dbReference type="KEGG" id="mtv:RVBD_0488"/>
<dbReference type="TubercuList" id="Rv0488"/>
<dbReference type="eggNOG" id="COG1279">
    <property type="taxonomic scope" value="Bacteria"/>
</dbReference>
<dbReference type="InParanoid" id="P9WK33"/>
<dbReference type="OrthoDB" id="5638726at2"/>
<dbReference type="PhylomeDB" id="P9WK33"/>
<dbReference type="Proteomes" id="UP000001584">
    <property type="component" value="Chromosome"/>
</dbReference>
<dbReference type="GO" id="GO:0005886">
    <property type="term" value="C:plasma membrane"/>
    <property type="evidence" value="ECO:0000318"/>
    <property type="project" value="GO_Central"/>
</dbReference>
<dbReference type="GO" id="GO:0015171">
    <property type="term" value="F:amino acid transmembrane transporter activity"/>
    <property type="evidence" value="ECO:0000318"/>
    <property type="project" value="GO_Central"/>
</dbReference>
<dbReference type="GO" id="GO:0006865">
    <property type="term" value="P:amino acid transport"/>
    <property type="evidence" value="ECO:0000318"/>
    <property type="project" value="GO_Central"/>
</dbReference>
<dbReference type="InterPro" id="IPR001123">
    <property type="entry name" value="LeuE-type"/>
</dbReference>
<dbReference type="InterPro" id="IPR004777">
    <property type="entry name" value="Lys/arg_exporter"/>
</dbReference>
<dbReference type="NCBIfam" id="TIGR00948">
    <property type="entry name" value="2a75"/>
    <property type="match status" value="1"/>
</dbReference>
<dbReference type="PANTHER" id="PTHR30086">
    <property type="entry name" value="ARGININE EXPORTER PROTEIN ARGO"/>
    <property type="match status" value="1"/>
</dbReference>
<dbReference type="PANTHER" id="PTHR30086:SF20">
    <property type="entry name" value="ARGININE EXPORTER PROTEIN ARGO-RELATED"/>
    <property type="match status" value="1"/>
</dbReference>
<dbReference type="Pfam" id="PF01810">
    <property type="entry name" value="LysE"/>
    <property type="match status" value="1"/>
</dbReference>
<evidence type="ECO:0000255" key="1"/>
<evidence type="ECO:0000305" key="2"/>
<accession>P9WK33</accession>
<accession>L0T6U2</accession>
<accession>P64711</accession>
<accession>Q11154</accession>
<reference key="1">
    <citation type="journal article" date="1998" name="Nature">
        <title>Deciphering the biology of Mycobacterium tuberculosis from the complete genome sequence.</title>
        <authorList>
            <person name="Cole S.T."/>
            <person name="Brosch R."/>
            <person name="Parkhill J."/>
            <person name="Garnier T."/>
            <person name="Churcher C.M."/>
            <person name="Harris D.E."/>
            <person name="Gordon S.V."/>
            <person name="Eiglmeier K."/>
            <person name="Gas S."/>
            <person name="Barry C.E. III"/>
            <person name="Tekaia F."/>
            <person name="Badcock K."/>
            <person name="Basham D."/>
            <person name="Brown D."/>
            <person name="Chillingworth T."/>
            <person name="Connor R."/>
            <person name="Davies R.M."/>
            <person name="Devlin K."/>
            <person name="Feltwell T."/>
            <person name="Gentles S."/>
            <person name="Hamlin N."/>
            <person name="Holroyd S."/>
            <person name="Hornsby T."/>
            <person name="Jagels K."/>
            <person name="Krogh A."/>
            <person name="McLean J."/>
            <person name="Moule S."/>
            <person name="Murphy L.D."/>
            <person name="Oliver S."/>
            <person name="Osborne J."/>
            <person name="Quail M.A."/>
            <person name="Rajandream M.A."/>
            <person name="Rogers J."/>
            <person name="Rutter S."/>
            <person name="Seeger K."/>
            <person name="Skelton S."/>
            <person name="Squares S."/>
            <person name="Squares R."/>
            <person name="Sulston J.E."/>
            <person name="Taylor K."/>
            <person name="Whitehead S."/>
            <person name="Barrell B.G."/>
        </authorList>
    </citation>
    <scope>NUCLEOTIDE SEQUENCE [LARGE SCALE GENOMIC DNA]</scope>
    <source>
        <strain>ATCC 25618 / H37Rv</strain>
    </source>
</reference>
<name>Y488_MYCTU</name>
<protein>
    <recommendedName>
        <fullName>Putative amino-acid transporter Rv0488</fullName>
    </recommendedName>
</protein>
<sequence>MMTLKVAIGPQNAFVLRQGIRREYVLVIVALCGIADGALIAAGVGGFAALIHAHPNMTLVARFGGAAFLIGYALLAARNAWRPSGLVPSESGPAALIGVVQMCLVVTFLNPHVYLDTVVLIGALANEESDLRWFFGAGAWAASVVWFAVLGFSAGRLQPFFATPAAWRILDALVAVTMIGVAVVVLVTSPSVPTANVALII</sequence>
<organism>
    <name type="scientific">Mycobacterium tuberculosis (strain ATCC 25618 / H37Rv)</name>
    <dbReference type="NCBI Taxonomy" id="83332"/>
    <lineage>
        <taxon>Bacteria</taxon>
        <taxon>Bacillati</taxon>
        <taxon>Actinomycetota</taxon>
        <taxon>Actinomycetes</taxon>
        <taxon>Mycobacteriales</taxon>
        <taxon>Mycobacteriaceae</taxon>
        <taxon>Mycobacterium</taxon>
        <taxon>Mycobacterium tuberculosis complex</taxon>
    </lineage>
</organism>
<gene>
    <name type="ordered locus">Rv0488</name>
    <name type="ORF">MTCY20G9.14</name>
</gene>
<proteinExistence type="inferred from homology"/>
<feature type="chain" id="PRO_0000103692" description="Putative amino-acid transporter Rv0488">
    <location>
        <begin position="1"/>
        <end position="201"/>
    </location>
</feature>
<feature type="transmembrane region" description="Helical" evidence="1">
    <location>
        <begin position="25"/>
        <end position="45"/>
    </location>
</feature>
<feature type="transmembrane region" description="Helical" evidence="1">
    <location>
        <begin position="57"/>
        <end position="77"/>
    </location>
</feature>
<feature type="transmembrane region" description="Helical" evidence="1">
    <location>
        <begin position="104"/>
        <end position="124"/>
    </location>
</feature>
<feature type="transmembrane region" description="Helical" evidence="1">
    <location>
        <begin position="133"/>
        <end position="153"/>
    </location>
</feature>
<feature type="transmembrane region" description="Helical" evidence="1">
    <location>
        <begin position="169"/>
        <end position="189"/>
    </location>
</feature>
<comment type="subcellular location">
    <subcellularLocation>
        <location evidence="2">Cell membrane</location>
        <topology evidence="2">Multi-pass membrane protein</topology>
    </subcellularLocation>
</comment>
<comment type="similarity">
    <text evidence="2">Belongs to the LysE/ArgO transporter (TC 2.A.75) family.</text>
</comment>
<keyword id="KW-0029">Amino-acid transport</keyword>
<keyword id="KW-1003">Cell membrane</keyword>
<keyword id="KW-0472">Membrane</keyword>
<keyword id="KW-1185">Reference proteome</keyword>
<keyword id="KW-0812">Transmembrane</keyword>
<keyword id="KW-1133">Transmembrane helix</keyword>
<keyword id="KW-0813">Transport</keyword>